<organism>
    <name type="scientific">Sus scrofa</name>
    <name type="common">Pig</name>
    <dbReference type="NCBI Taxonomy" id="9823"/>
    <lineage>
        <taxon>Eukaryota</taxon>
        <taxon>Metazoa</taxon>
        <taxon>Chordata</taxon>
        <taxon>Craniata</taxon>
        <taxon>Vertebrata</taxon>
        <taxon>Euteleostomi</taxon>
        <taxon>Mammalia</taxon>
        <taxon>Eutheria</taxon>
        <taxon>Laurasiatheria</taxon>
        <taxon>Artiodactyla</taxon>
        <taxon>Suina</taxon>
        <taxon>Suidae</taxon>
        <taxon>Sus</taxon>
    </lineage>
</organism>
<protein>
    <recommendedName>
        <fullName>Calcitonin receptor-stimulating peptide 1</fullName>
        <shortName>CRSP-1</shortName>
    </recommendedName>
</protein>
<gene>
    <name type="primary">CRSP1</name>
    <name type="synonym">CRSP</name>
</gene>
<sequence length="126" mass="14240">MGFWKFPPFLVLSILVLYQAGMFHTAPMRSAFGSPFDPATLSEEESRLLLAAMVNDYEQMKAREMQKQRAQGSGISVQKRSCNTATCMTHRLVGLLSRSGSMVRSNLLPTKMGFKVFGGRRRNFWI</sequence>
<feature type="signal peptide" evidence="2">
    <location>
        <begin position="1"/>
        <end position="25"/>
    </location>
</feature>
<feature type="propeptide" id="PRO_0000353076">
    <location>
        <begin position="26"/>
        <end position="78"/>
    </location>
</feature>
<feature type="peptide" id="PRO_0000353077" description="Calcitonin receptor-stimulating peptide 1">
    <location>
        <begin position="81"/>
        <end position="118"/>
    </location>
</feature>
<feature type="propeptide" id="PRO_0000353078" evidence="1">
    <location>
        <begin position="123"/>
        <end position="126"/>
    </location>
</feature>
<feature type="modified residue" description="Glycine amide" evidence="1">
    <location>
        <position position="118"/>
    </location>
</feature>
<feature type="disulfide bond" evidence="1">
    <location>
        <begin position="82"/>
        <end position="87"/>
    </location>
</feature>
<keyword id="KW-0027">Amidation</keyword>
<keyword id="KW-0165">Cleavage on pair of basic residues</keyword>
<keyword id="KW-0903">Direct protein sequencing</keyword>
<keyword id="KW-1015">Disulfide bond</keyword>
<keyword id="KW-0675">Receptor</keyword>
<keyword id="KW-1185">Reference proteome</keyword>
<keyword id="KW-0964">Secreted</keyword>
<keyword id="KW-0732">Signal</keyword>
<evidence type="ECO:0000250" key="1"/>
<evidence type="ECO:0000255" key="2"/>
<evidence type="ECO:0000269" key="3">
    <source>
    </source>
</evidence>
<evidence type="ECO:0000269" key="4">
    <source>
    </source>
</evidence>
<evidence type="ECO:0000305" key="5"/>
<proteinExistence type="evidence at protein level"/>
<accession>Q862B1</accession>
<reference key="1">
    <citation type="journal article" date="2003" name="J. Biol. Chem.">
        <title>Calcitonin receptor-stimulating peptide, a new member of the calcitonin gene-related peptide family. Its isolation from porcine brain, structure, tissue distribution, and biological activity.</title>
        <authorList>
            <person name="Katafuchi T."/>
            <person name="Kikumoto K."/>
            <person name="Hamano K."/>
            <person name="Kangawa K."/>
            <person name="Matsuo H."/>
            <person name="Minamino N."/>
        </authorList>
    </citation>
    <scope>NUCLEOTIDE SEQUENCE [MRNA]</scope>
    <scope>PROTEIN SEQUENCE OF 81-118</scope>
    <scope>MASS SPECTROMETRY</scope>
    <scope>FUNCTION</scope>
    <scope>TISSUE SPECIFICITY</scope>
    <source>
        <tissue>Brain</tissue>
    </source>
</reference>
<reference key="2">
    <citation type="journal article" date="2008" name="Cytogenet. Genome Res.">
        <title>Genomic organization, expression and evolution of porcine CRSP1, 2, and 3.</title>
        <authorList>
            <person name="Rezaeian A.H."/>
            <person name="Katafuchi T."/>
            <person name="Yoshizawa M."/>
            <person name="Hiraiwa N."/>
            <person name="Saito T."/>
            <person name="Nishibori M."/>
            <person name="Hamano K."/>
            <person name="Minamino N."/>
            <person name="Yasue H."/>
        </authorList>
    </citation>
    <scope>NUCLEOTIDE SEQUENCE [GENOMIC DNA]</scope>
    <scope>TISSUE SPECIFICITY</scope>
</reference>
<comment type="function">
    <text evidence="3">Stimulates cAMP production in porcine kidney cell line LLC-PK1 via the calcitonin receptor (CT) but not via the CT-like (CL) receptor.</text>
</comment>
<comment type="subcellular location">
    <subcellularLocation>
        <location evidence="1">Secreted</location>
    </subcellularLocation>
</comment>
<comment type="tissue specificity">
    <text evidence="3 4">Mainly expressed in the thyroid gland and CNS. Found in the nerve cells of cerebrum, hippocampus, hypothalamus, pons/midbrain and thalamus.</text>
</comment>
<comment type="mass spectrometry" mass="4130.6" error="0.7" method="Electrospray" evidence="3"/>
<comment type="similarity">
    <text evidence="5">Belongs to the calcitonin family.</text>
</comment>
<dbReference type="EMBL" id="AB094586">
    <property type="protein sequence ID" value="BAC66702.1"/>
    <property type="molecule type" value="mRNA"/>
</dbReference>
<dbReference type="EMBL" id="AB164322">
    <property type="protein sequence ID" value="BAF36048.1"/>
    <property type="molecule type" value="Genomic_DNA"/>
</dbReference>
<dbReference type="RefSeq" id="NP_998907.1">
    <property type="nucleotide sequence ID" value="NM_213742.1"/>
</dbReference>
<dbReference type="SMR" id="Q862B1"/>
<dbReference type="FunCoup" id="Q862B1">
    <property type="interactions" value="12"/>
</dbReference>
<dbReference type="STRING" id="9823.ENSSSCP00000040016"/>
<dbReference type="PaxDb" id="9823-ENSSSCP00000014232"/>
<dbReference type="Ensembl" id="ENSSSCT00090046655">
    <property type="protein sequence ID" value="ENSSSCP00090028874"/>
    <property type="gene ID" value="ENSSSCG00090026426"/>
</dbReference>
<dbReference type="Ensembl" id="ENSSSCT00105046012">
    <property type="protein sequence ID" value="ENSSSCP00105031984"/>
    <property type="gene ID" value="ENSSSCG00105024347"/>
</dbReference>
<dbReference type="Ensembl" id="ENSSSCT00115005438">
    <property type="protein sequence ID" value="ENSSSCP00115005053"/>
    <property type="gene ID" value="ENSSSCG00115003237"/>
</dbReference>
<dbReference type="GeneID" id="396563"/>
<dbReference type="KEGG" id="ssc:396563"/>
<dbReference type="CTD" id="797"/>
<dbReference type="eggNOG" id="ENOG502SQMP">
    <property type="taxonomic scope" value="Eukaryota"/>
</dbReference>
<dbReference type="InParanoid" id="Q862B1"/>
<dbReference type="OrthoDB" id="9929923at2759"/>
<dbReference type="Proteomes" id="UP000008227">
    <property type="component" value="Unplaced"/>
</dbReference>
<dbReference type="Proteomes" id="UP000314985">
    <property type="component" value="Unplaced"/>
</dbReference>
<dbReference type="Proteomes" id="UP000694570">
    <property type="component" value="Unplaced"/>
</dbReference>
<dbReference type="Proteomes" id="UP000694571">
    <property type="component" value="Unplaced"/>
</dbReference>
<dbReference type="Proteomes" id="UP000694720">
    <property type="component" value="Unplaced"/>
</dbReference>
<dbReference type="Proteomes" id="UP000694722">
    <property type="component" value="Unplaced"/>
</dbReference>
<dbReference type="Proteomes" id="UP000694723">
    <property type="component" value="Unplaced"/>
</dbReference>
<dbReference type="Proteomes" id="UP000694724">
    <property type="component" value="Unplaced"/>
</dbReference>
<dbReference type="Proteomes" id="UP000694725">
    <property type="component" value="Unplaced"/>
</dbReference>
<dbReference type="Proteomes" id="UP000694726">
    <property type="component" value="Unplaced"/>
</dbReference>
<dbReference type="Proteomes" id="UP000694727">
    <property type="component" value="Unplaced"/>
</dbReference>
<dbReference type="Proteomes" id="UP000694728">
    <property type="component" value="Unplaced"/>
</dbReference>
<dbReference type="GO" id="GO:0005615">
    <property type="term" value="C:extracellular space"/>
    <property type="evidence" value="ECO:0000318"/>
    <property type="project" value="GO_Central"/>
</dbReference>
<dbReference type="GO" id="GO:0031716">
    <property type="term" value="F:calcitonin receptor binding"/>
    <property type="evidence" value="ECO:0000318"/>
    <property type="project" value="GO_Central"/>
</dbReference>
<dbReference type="GO" id="GO:0005179">
    <property type="term" value="F:hormone activity"/>
    <property type="evidence" value="ECO:0007669"/>
    <property type="project" value="InterPro"/>
</dbReference>
<dbReference type="GO" id="GO:0007189">
    <property type="term" value="P:adenylate cyclase-activating G protein-coupled receptor signaling pathway"/>
    <property type="evidence" value="ECO:0000318"/>
    <property type="project" value="GO_Central"/>
</dbReference>
<dbReference type="GO" id="GO:0051480">
    <property type="term" value="P:regulation of cytosolic calcium ion concentration"/>
    <property type="evidence" value="ECO:0000318"/>
    <property type="project" value="GO_Central"/>
</dbReference>
<dbReference type="Gene3D" id="6.10.250.2190">
    <property type="match status" value="1"/>
</dbReference>
<dbReference type="InterPro" id="IPR021117">
    <property type="entry name" value="Calcitonin-like"/>
</dbReference>
<dbReference type="InterPro" id="IPR021116">
    <property type="entry name" value="Calcitonin/adrenomedullin"/>
</dbReference>
<dbReference type="InterPro" id="IPR018360">
    <property type="entry name" value="Calcitonin_CS"/>
</dbReference>
<dbReference type="InterPro" id="IPR015476">
    <property type="entry name" value="Calcitonin_gene-rel_peptide"/>
</dbReference>
<dbReference type="InterPro" id="IPR001693">
    <property type="entry name" value="Calcitonin_peptide-like"/>
</dbReference>
<dbReference type="PANTHER" id="PTHR10505:SF13">
    <property type="entry name" value="CALCITONIN GENE-RELATED PEPTIDE 1"/>
    <property type="match status" value="1"/>
</dbReference>
<dbReference type="PANTHER" id="PTHR10505">
    <property type="entry name" value="CALCITONIN-RELATED"/>
    <property type="match status" value="1"/>
</dbReference>
<dbReference type="Pfam" id="PF00214">
    <property type="entry name" value="Calc_CGRP_IAPP"/>
    <property type="match status" value="1"/>
</dbReference>
<dbReference type="PRINTS" id="PR00817">
    <property type="entry name" value="CALCITONINB"/>
</dbReference>
<dbReference type="SMART" id="SM00113">
    <property type="entry name" value="CALCITONIN"/>
    <property type="match status" value="1"/>
</dbReference>
<dbReference type="PROSITE" id="PS00258">
    <property type="entry name" value="CALCITONIN"/>
    <property type="match status" value="1"/>
</dbReference>
<name>CRSP1_PIG</name>